<accession>B1AWN6</accession>
<accession>A0A0J9YTW6</accession>
<feature type="chain" id="PRO_0000446659" description="Sodium channel protein type 2 subunit alpha">
    <location>
        <begin position="1"/>
        <end position="2006"/>
    </location>
</feature>
<feature type="transmembrane region" description="Helical; Name=S1 of repeat I" evidence="1">
    <location>
        <begin position="130"/>
        <end position="148"/>
    </location>
</feature>
<feature type="transmembrane region" description="Helical; Name=S2 of repeat I" evidence="1">
    <location>
        <begin position="156"/>
        <end position="176"/>
    </location>
</feature>
<feature type="transmembrane region" description="Helical; Name=S3 of repeat I" evidence="1">
    <location>
        <begin position="191"/>
        <end position="208"/>
    </location>
</feature>
<feature type="transmembrane region" description="Helical; Name=S4 of repeat I" evidence="1">
    <location>
        <begin position="215"/>
        <end position="231"/>
    </location>
</feature>
<feature type="transmembrane region" description="Helical; Name=S5 of repeat I" evidence="1">
    <location>
        <begin position="251"/>
        <end position="270"/>
    </location>
</feature>
<feature type="intramembrane region" description="Pore-forming" evidence="1">
    <location>
        <begin position="370"/>
        <end position="394"/>
    </location>
</feature>
<feature type="transmembrane region" description="Helical; Name=S6 of repeat I" evidence="1">
    <location>
        <begin position="402"/>
        <end position="422"/>
    </location>
</feature>
<feature type="transmembrane region" description="Helical; Name=S1 of repeat II" evidence="1">
    <location>
        <begin position="761"/>
        <end position="779"/>
    </location>
</feature>
<feature type="transmembrane region" description="Helical; Name=S2 of repeat II" evidence="1">
    <location>
        <begin position="791"/>
        <end position="810"/>
    </location>
</feature>
<feature type="transmembrane region" description="Helical; Name=S3 of repeat II" evidence="1">
    <location>
        <begin position="825"/>
        <end position="844"/>
    </location>
</feature>
<feature type="transmembrane region" description="Helical; Name=S4 of repeat II" evidence="1">
    <location>
        <begin position="847"/>
        <end position="864"/>
    </location>
</feature>
<feature type="transmembrane region" description="Helical; Name=S5 of repeat II" evidence="1">
    <location>
        <begin position="881"/>
        <end position="899"/>
    </location>
</feature>
<feature type="intramembrane region" description="Pore-forming" evidence="1">
    <location>
        <begin position="929"/>
        <end position="949"/>
    </location>
</feature>
<feature type="transmembrane region" description="Helical; Name=S6 of repeat II" evidence="1">
    <location>
        <begin position="963"/>
        <end position="983"/>
    </location>
</feature>
<feature type="transmembrane region" description="Helical; Name=S1 of repeat III" evidence="1">
    <location>
        <begin position="1211"/>
        <end position="1228"/>
    </location>
</feature>
<feature type="transmembrane region" description="Helical; Name=S2 of repeat III" evidence="1">
    <location>
        <begin position="1242"/>
        <end position="1260"/>
    </location>
</feature>
<feature type="transmembrane region" description="Helical; Name=S3 of repeat III" evidence="1">
    <location>
        <begin position="1275"/>
        <end position="1293"/>
    </location>
</feature>
<feature type="transmembrane region" description="Helical; Name=S4 of repeat III" evidence="1">
    <location>
        <begin position="1302"/>
        <end position="1320"/>
    </location>
</feature>
<feature type="transmembrane region" description="Helical; Name=S5 of repeat III" evidence="1">
    <location>
        <begin position="1338"/>
        <end position="1357"/>
    </location>
</feature>
<feature type="intramembrane region" description="Pore-forming" evidence="1">
    <location>
        <begin position="1410"/>
        <end position="1431"/>
    </location>
</feature>
<feature type="transmembrane region" description="Helical; Name=S6 of repeat III" evidence="1">
    <location>
        <begin position="1449"/>
        <end position="1470"/>
    </location>
</feature>
<feature type="transmembrane region" description="Helical; Name=S1 of repeat IV" evidence="1">
    <location>
        <begin position="1534"/>
        <end position="1551"/>
    </location>
</feature>
<feature type="transmembrane region" description="Helical; Name=S2 of repeat IV" evidence="1">
    <location>
        <begin position="1563"/>
        <end position="1581"/>
    </location>
</feature>
<feature type="transmembrane region" description="Helical; Name=S3 of repeat IV" evidence="1">
    <location>
        <begin position="1594"/>
        <end position="1611"/>
    </location>
</feature>
<feature type="transmembrane region" description="Helical; Name=S4 of repeat IV" evidence="1">
    <location>
        <begin position="1625"/>
        <end position="1641"/>
    </location>
</feature>
<feature type="transmembrane region" description="Helical; Name=S5 of repeat IV" evidence="1">
    <location>
        <begin position="1661"/>
        <end position="1678"/>
    </location>
</feature>
<feature type="intramembrane region" description="Pore-forming" evidence="1">
    <location>
        <begin position="1701"/>
        <end position="1723"/>
    </location>
</feature>
<feature type="transmembrane region" description="Helical; Name=S6 of repeat IV" evidence="1">
    <location>
        <begin position="1754"/>
        <end position="1776"/>
    </location>
</feature>
<feature type="repeat" description="I" evidence="2">
    <location>
        <begin position="111"/>
        <end position="456"/>
    </location>
</feature>
<feature type="repeat" description="II" evidence="2">
    <location>
        <begin position="742"/>
        <end position="1014"/>
    </location>
</feature>
<feature type="repeat" description="III" evidence="2">
    <location>
        <begin position="1191"/>
        <end position="1505"/>
    </location>
</feature>
<feature type="repeat" description="IV" evidence="2">
    <location>
        <begin position="1514"/>
        <end position="1812"/>
    </location>
</feature>
<feature type="domain" description="IQ" evidence="5">
    <location>
        <begin position="1906"/>
        <end position="1935"/>
    </location>
</feature>
<feature type="region of interest" description="Disordered" evidence="6">
    <location>
        <begin position="28"/>
        <end position="61"/>
    </location>
</feature>
<feature type="region of interest" description="Disordered" evidence="6">
    <location>
        <begin position="494"/>
        <end position="529"/>
    </location>
</feature>
<feature type="region of interest" description="Disordered" evidence="6">
    <location>
        <begin position="589"/>
        <end position="635"/>
    </location>
</feature>
<feature type="region of interest" description="Binds SCN2B" evidence="3">
    <location>
        <begin position="918"/>
        <end position="919"/>
    </location>
</feature>
<feature type="region of interest" description="Disordered" evidence="6">
    <location>
        <begin position="1121"/>
        <end position="1167"/>
    </location>
</feature>
<feature type="region of interest" description="Disordered" evidence="6">
    <location>
        <begin position="1934"/>
        <end position="2006"/>
    </location>
</feature>
<feature type="compositionally biased region" description="Basic and acidic residues" evidence="6">
    <location>
        <begin position="511"/>
        <end position="529"/>
    </location>
</feature>
<feature type="compositionally biased region" description="Basic and acidic residues" evidence="6">
    <location>
        <begin position="596"/>
        <end position="610"/>
    </location>
</feature>
<feature type="compositionally biased region" description="Acidic residues" evidence="6">
    <location>
        <begin position="1156"/>
        <end position="1167"/>
    </location>
</feature>
<feature type="compositionally biased region" description="Basic and acidic residues" evidence="6">
    <location>
        <begin position="1934"/>
        <end position="1965"/>
    </location>
</feature>
<feature type="compositionally biased region" description="Basic and acidic residues" evidence="6">
    <location>
        <begin position="1980"/>
        <end position="2006"/>
    </location>
</feature>
<feature type="site" description="Binds Mu-conotoxin KIIIA" evidence="3">
    <location>
        <position position="330"/>
    </location>
</feature>
<feature type="site" description="Binds Mu-conotoxin KIIIA" evidence="3">
    <location>
        <position position="362"/>
    </location>
</feature>
<feature type="site" description="Binds SCN2B; via carbonyl oxygen" evidence="3">
    <location>
        <position position="910"/>
    </location>
</feature>
<feature type="site" description="Binds Mu-conotoxin KIIIA; via amide nitrogen" evidence="3">
    <location>
        <position position="917"/>
    </location>
</feature>
<feature type="site" description="Binds Mu-conotoxin KIIIA; via carbonyl oxygen" evidence="3">
    <location>
        <position position="921"/>
    </location>
</feature>
<feature type="site" description="Binds Mu-conotoxin KIIIA" evidence="3">
    <location>
        <position position="946"/>
    </location>
</feature>
<feature type="site" description="Binds Mu-conotoxin KIIIA" evidence="3">
    <location>
        <position position="950"/>
    </location>
</feature>
<feature type="site" description="Binds Mu-conotoxin KIIIA; via amide nitrogen" evidence="3">
    <location>
        <position position="1375"/>
    </location>
</feature>
<feature type="site" description="Binds Mu-conotoxin KIIIA" evidence="3">
    <location>
        <position position="1430"/>
    </location>
</feature>
<feature type="site" description="Binds Mu-conotoxin KIIIA" evidence="3">
    <location>
        <position position="1444"/>
    </location>
</feature>
<feature type="site" description="Important for channel closure" evidence="2">
    <location>
        <position position="1490"/>
    </location>
</feature>
<feature type="modified residue" description="Phosphoserine" evidence="2">
    <location>
        <position position="4"/>
    </location>
</feature>
<feature type="modified residue" description="Phosphoserine" evidence="2">
    <location>
        <position position="468"/>
    </location>
</feature>
<feature type="modified residue" description="Phosphoserine" evidence="2">
    <location>
        <position position="471"/>
    </location>
</feature>
<feature type="modified residue" description="Phosphoserine" evidence="2">
    <location>
        <position position="484"/>
    </location>
</feature>
<feature type="modified residue" description="Phosphoserine" evidence="2">
    <location>
        <position position="526"/>
    </location>
</feature>
<feature type="modified residue" description="Phosphoserine" evidence="2">
    <location>
        <position position="528"/>
    </location>
</feature>
<feature type="modified residue" description="Phosphoserine" evidence="2">
    <location>
        <position position="531"/>
    </location>
</feature>
<feature type="modified residue" description="Phosphoserine" evidence="2">
    <location>
        <position position="553"/>
    </location>
</feature>
<feature type="modified residue" description="Phosphoserine" evidence="2">
    <location>
        <position position="554"/>
    </location>
</feature>
<feature type="modified residue" description="Phosphoserine" evidence="2">
    <location>
        <position position="558"/>
    </location>
</feature>
<feature type="modified residue" description="Phosphoserine" evidence="2">
    <location>
        <position position="573"/>
    </location>
</feature>
<feature type="modified residue" description="Phosphoserine" evidence="2">
    <location>
        <position position="576"/>
    </location>
</feature>
<feature type="modified residue" description="Phosphoserine" evidence="2">
    <location>
        <position position="589"/>
    </location>
</feature>
<feature type="modified residue" description="Phosphoserine" evidence="2">
    <location>
        <position position="610"/>
    </location>
</feature>
<feature type="modified residue" description="Phosphoserine" evidence="2">
    <location>
        <position position="623"/>
    </location>
</feature>
<feature type="modified residue" description="Phosphoserine" evidence="2">
    <location>
        <position position="687"/>
    </location>
</feature>
<feature type="modified residue" description="Phosphoserine" evidence="2">
    <location>
        <position position="688"/>
    </location>
</feature>
<feature type="modified residue" description="Phosphoserine" evidence="2">
    <location>
        <position position="722"/>
    </location>
</feature>
<feature type="modified residue" description="Phosphoserine" evidence="2">
    <location>
        <position position="1507"/>
    </location>
</feature>
<feature type="modified residue" description="Phosphoserine" evidence="2">
    <location>
        <position position="1931"/>
    </location>
</feature>
<feature type="modified residue" description="Phosphothreonine" evidence="2">
    <location>
        <position position="1944"/>
    </location>
</feature>
<feature type="modified residue" description="Phosphothreonine" evidence="2">
    <location>
        <position position="1964"/>
    </location>
</feature>
<feature type="modified residue" description="Phosphothreonine" evidence="2">
    <location>
        <position position="1967"/>
    </location>
</feature>
<feature type="modified residue" description="Phosphoserine" evidence="2">
    <location>
        <position position="1972"/>
    </location>
</feature>
<feature type="glycosylation site" description="N-linked (GlcNAc...) asparagine" evidence="4">
    <location>
        <position position="285"/>
    </location>
</feature>
<feature type="glycosylation site" description="N-linked (GlcNAc...) asparagine" evidence="4">
    <location>
        <position position="291"/>
    </location>
</feature>
<feature type="glycosylation site" description="N-linked (GlcNAc...) asparagine" evidence="4">
    <location>
        <position position="297"/>
    </location>
</feature>
<feature type="glycosylation site" description="N-linked (GlcNAc...) asparagine" evidence="4">
    <location>
        <position position="303"/>
    </location>
</feature>
<feature type="glycosylation site" description="N-linked (GlcNAc...) asparagine" evidence="4">
    <location>
        <position position="308"/>
    </location>
</feature>
<feature type="glycosylation site" description="N-linked (GlcNAc...) asparagine" evidence="4">
    <location>
        <position position="340"/>
    </location>
</feature>
<feature type="disulfide bond" evidence="3">
    <location>
        <begin position="278"/>
        <end position="338"/>
    </location>
</feature>
<feature type="disulfide bond" description="Interchain; with SCN2B or SCN4B" evidence="2">
    <location>
        <position position="911"/>
    </location>
</feature>
<feature type="disulfide bond" description="Interchain; with the conotoxin GVIIJ (when the channel is not linked to SCN2B or SCN4B; the bond to SCN2B or SCN4B protects the channel from the inhibition by toxin)" evidence="2">
    <location>
        <position position="911"/>
    </location>
</feature>
<feature type="disulfide bond" evidence="3">
    <location>
        <begin position="913"/>
        <end position="919"/>
    </location>
</feature>
<feature type="disulfide bond" evidence="1">
    <location>
        <begin position="951"/>
        <end position="960"/>
    </location>
</feature>
<feature type="disulfide bond" evidence="3">
    <location>
        <begin position="1367"/>
        <end position="1387"/>
    </location>
</feature>
<feature type="disulfide bond" evidence="3">
    <location>
        <begin position="1732"/>
        <end position="1747"/>
    </location>
</feature>
<feature type="cross-link" description="Glycyl lysine isopeptide (Lys-Gly) (interchain with G-Cter in SUMO1)" evidence="2">
    <location>
        <position position="38"/>
    </location>
</feature>
<feature type="sequence variant">
    <original>N</original>
    <variation>D</variation>
    <location>
        <position position="209"/>
    </location>
</feature>
<feature type="mutagenesis site" description="Gain of function mutation. Mutant mice display enhanced persistent sodium current, have seizures and behavioral abnormalities. Half of the mice die before four months of age, and only 10% survive to nine months. Epilepsy severity in this model is strain-dependent. Mutation in a C57BL/6J background exhibit a mild disorder, whereas animals intercrossed with SJL7/j mice show a severe phenotype." evidence="8 9">
    <original>GAL</original>
    <variation>QQQ</variation>
    <location>
        <begin position="880"/>
        <end position="882"/>
    </location>
</feature>
<protein>
    <recommendedName>
        <fullName evidence="11">Sodium channel protein type 2 subunit alpha</fullName>
    </recommendedName>
    <alternativeName>
        <fullName>Voltage-gated sodium channel subunit alpha Nav1.2</fullName>
    </alternativeName>
</protein>
<reference key="1">
    <citation type="journal article" date="2009" name="PLoS Biol.">
        <title>Lineage-specific biology revealed by a finished genome assembly of the mouse.</title>
        <authorList>
            <person name="Church D.M."/>
            <person name="Goodstadt L."/>
            <person name="Hillier L.W."/>
            <person name="Zody M.C."/>
            <person name="Goldstein S."/>
            <person name="She X."/>
            <person name="Bult C.J."/>
            <person name="Agarwala R."/>
            <person name="Cherry J.L."/>
            <person name="DiCuccio M."/>
            <person name="Hlavina W."/>
            <person name="Kapustin Y."/>
            <person name="Meric P."/>
            <person name="Maglott D."/>
            <person name="Birtle Z."/>
            <person name="Marques A.C."/>
            <person name="Graves T."/>
            <person name="Zhou S."/>
            <person name="Teague B."/>
            <person name="Potamousis K."/>
            <person name="Churas C."/>
            <person name="Place M."/>
            <person name="Herschleb J."/>
            <person name="Runnheim R."/>
            <person name="Forrest D."/>
            <person name="Amos-Landgraf J."/>
            <person name="Schwartz D.C."/>
            <person name="Cheng Z."/>
            <person name="Lindblad-Toh K."/>
            <person name="Eichler E.E."/>
            <person name="Ponting C.P."/>
        </authorList>
    </citation>
    <scope>NUCLEOTIDE SEQUENCE [LARGE SCALE GENOMIC DNA]</scope>
    <source>
        <strain>C57BL/6J</strain>
    </source>
</reference>
<reference key="2">
    <citation type="journal article" date="2010" name="Cell">
        <title>A tissue-specific atlas of mouse protein phosphorylation and expression.</title>
        <authorList>
            <person name="Huttlin E.L."/>
            <person name="Jedrychowski M.P."/>
            <person name="Elias J.E."/>
            <person name="Goswami T."/>
            <person name="Rad R."/>
            <person name="Beausoleil S.A."/>
            <person name="Villen J."/>
            <person name="Haas W."/>
            <person name="Sowa M.E."/>
            <person name="Gygi S.P."/>
        </authorList>
    </citation>
    <scope>IDENTIFICATION BY MASS SPECTROMETRY [LARGE SCALE ANALYSIS]</scope>
</reference>
<reference key="3">
    <citation type="journal article" date="2000" name="Biophys. J.">
        <title>Neuronal death and perinatal lethality in voltage-gated sodium channel alpha(II)-deficient mice.</title>
        <authorList>
            <person name="Planells-Cases R."/>
            <person name="Caprini M."/>
            <person name="Zhang J."/>
            <person name="Rockenstein E.M."/>
            <person name="Rivera R.R."/>
            <person name="Murre C."/>
            <person name="Masliah E."/>
            <person name="Montal M."/>
        </authorList>
    </citation>
    <scope>DISRUPTION PHENOTYPE</scope>
    <scope>FUNCTION</scope>
    <scope>TRANSPORTER ACTIVITY</scope>
    <scope>TISSUE SPECIFICITY</scope>
    <scope>SUBCELLULAR LOCATION</scope>
</reference>
<reference key="4">
    <citation type="journal article" date="2001" name="Neuroscience">
        <title>A gain-of-function mutation in the sodium channel gene Scn2a results in seizures and behavioral abnormalities.</title>
        <authorList>
            <person name="Kearney J.A."/>
            <person name="Plummer N.W."/>
            <person name="Smith M.R."/>
            <person name="Kapur J."/>
            <person name="Cummins T.R."/>
            <person name="Waxman S.G."/>
            <person name="Goldin A.L."/>
            <person name="Meisler M.H."/>
        </authorList>
    </citation>
    <scope>FUNCTION</scope>
    <scope>TRANSPORTER ACTIVITY</scope>
    <scope>MUTAGENESIS OF 880-VAL--ALA-882</scope>
    <scope>TISSUE SPECIFICITY</scope>
</reference>
<reference key="5">
    <citation type="journal article" date="2017" name="Proc. Natl. Acad. Sci. U.S.A.">
        <title>CaMKII modulates sodium current in neurons from epileptic Scn2a mutant mice.</title>
        <authorList>
            <person name="Thompson C.H."/>
            <person name="Hawkins N.A."/>
            <person name="Kearney J.A."/>
            <person name="George A.L. Jr."/>
        </authorList>
    </citation>
    <scope>FUNCTION</scope>
    <scope>TRANSPORTER ACTIVITY</scope>
    <scope>MUTAGENESIS OF 880-VAL--ALA-882</scope>
</reference>
<reference key="6">
    <citation type="journal article" date="2018" name="Nat. Neurosci.">
        <title>Altered hippocampal replay is associated with memory impairment in mice heterozygous for the Scn2a gene.</title>
        <authorList>
            <person name="Middleton S.J."/>
            <person name="Kneller E.M."/>
            <person name="Chen S."/>
            <person name="Ogiwara I."/>
            <person name="Montal M."/>
            <person name="Yamakawa K."/>
            <person name="McHugh T.J."/>
        </authorList>
    </citation>
    <scope>FUNCTION</scope>
</reference>
<keyword id="KW-1003">Cell membrane</keyword>
<keyword id="KW-0175">Coiled coil</keyword>
<keyword id="KW-1015">Disulfide bond</keyword>
<keyword id="KW-0325">Glycoprotein</keyword>
<keyword id="KW-0407">Ion channel</keyword>
<keyword id="KW-0406">Ion transport</keyword>
<keyword id="KW-1017">Isopeptide bond</keyword>
<keyword id="KW-0472">Membrane</keyword>
<keyword id="KW-0597">Phosphoprotein</keyword>
<keyword id="KW-1185">Reference proteome</keyword>
<keyword id="KW-0677">Repeat</keyword>
<keyword id="KW-0915">Sodium</keyword>
<keyword id="KW-0894">Sodium channel</keyword>
<keyword id="KW-0739">Sodium transport</keyword>
<keyword id="KW-0812">Transmembrane</keyword>
<keyword id="KW-1133">Transmembrane helix</keyword>
<keyword id="KW-0813">Transport</keyword>
<keyword id="KW-0832">Ubl conjugation</keyword>
<keyword id="KW-0851">Voltage-gated channel</keyword>
<name>SCN2A_MOUSE</name>
<gene>
    <name evidence="12" type="primary">Scn2a</name>
    <name evidence="12" type="synonym">Scn2a1</name>
</gene>
<evidence type="ECO:0000250" key="1">
    <source>
        <dbReference type="UniProtKB" id="D0E0C2"/>
    </source>
</evidence>
<evidence type="ECO:0000250" key="2">
    <source>
        <dbReference type="UniProtKB" id="P04775"/>
    </source>
</evidence>
<evidence type="ECO:0000250" key="3">
    <source>
        <dbReference type="UniProtKB" id="Q99250"/>
    </source>
</evidence>
<evidence type="ECO:0000255" key="4"/>
<evidence type="ECO:0000255" key="5">
    <source>
        <dbReference type="PROSITE-ProRule" id="PRU00116"/>
    </source>
</evidence>
<evidence type="ECO:0000256" key="6">
    <source>
        <dbReference type="SAM" id="MobiDB-lite"/>
    </source>
</evidence>
<evidence type="ECO:0000269" key="7">
    <source>
    </source>
</evidence>
<evidence type="ECO:0000269" key="8">
    <source>
    </source>
</evidence>
<evidence type="ECO:0000269" key="9">
    <source>
    </source>
</evidence>
<evidence type="ECO:0000269" key="10">
    <source>
    </source>
</evidence>
<evidence type="ECO:0000305" key="11"/>
<evidence type="ECO:0000312" key="12">
    <source>
        <dbReference type="MGI" id="MGI:98248"/>
    </source>
</evidence>
<proteinExistence type="evidence at protein level"/>
<comment type="function">
    <text evidence="7 8 9 10">Mediates the voltage-dependent sodium ion permeability of excitable membranes. Assuming opened or closed conformations in response to the voltage difference across the membrane, the protein forms a sodium-selective channel through which Na(+) ions may pass in accordance with their electrochemical gradient (PubMed:10827969, PubMed:11166117, PubMed:28137877). Implicated in the regulation of hippocampal replay occurring within sharp wave ripples (SPW-R) important for memory (PubMed:29867081).</text>
</comment>
<comment type="catalytic activity">
    <reaction evidence="7 8 9">
        <text>Na(+)(in) = Na(+)(out)</text>
        <dbReference type="Rhea" id="RHEA:34963"/>
        <dbReference type="ChEBI" id="CHEBI:29101"/>
    </reaction>
</comment>
<comment type="subunit">
    <text evidence="2 3">Heterooligomer of a large alpha subunit and a smaller beta subunit. Heterooligomer with SCN2B or SCN4B; disulfide-linked. Interacts with NEDD4L. Interacts with CALM. Interacts with TMEM233 (By similarity).</text>
</comment>
<comment type="subcellular location">
    <subcellularLocation>
        <location evidence="7">Cell membrane</location>
        <topology evidence="4">Multi-pass membrane protein</topology>
    </subcellularLocation>
</comment>
<comment type="tissue specificity">
    <text evidence="7 8">Expressed in brain (at protein level) (PubMed:10827969, PubMed:11166117). Detected in hippocampus, cortex and brain stem (PubMed:10827969).</text>
</comment>
<comment type="domain">
    <text evidence="2">The sequence contains 4 internal repeats, each with 5 hydrophobic segments (S1, S2, S3, S5, S6) and one positively charged segment (S4). Segments S4 are probably the voltage-sensors and are characterized by a series of positively charged amino acids at every third position.</text>
</comment>
<comment type="PTM">
    <text evidence="2">Sumoylated at Lys-38. Sumoylation is induced by hypoxia, increases voltage-gated sodium current and mediates the early response to acute hypoxia in neurons. Sumoylated SCN2A is located at the cell membrane.</text>
</comment>
<comment type="disruption phenotype">
    <text evidence="7">Conditional knockout mice deficient in brain are morphologically and organogenically indistinguishable from their heterozygous littermates. They die perinatally with severe hypoxia and massive neuronal apoptosis, notably in the brainstem. Sodium channel currents recorded from cultured neurons of knockout mice are sharply attenuated.</text>
</comment>
<comment type="similarity">
    <text evidence="11">Belongs to the sodium channel (TC 1.A.1.10) family. Nav1.2/SCN2A subfamily.</text>
</comment>
<organism>
    <name type="scientific">Mus musculus</name>
    <name type="common">Mouse</name>
    <dbReference type="NCBI Taxonomy" id="10090"/>
    <lineage>
        <taxon>Eukaryota</taxon>
        <taxon>Metazoa</taxon>
        <taxon>Chordata</taxon>
        <taxon>Craniata</taxon>
        <taxon>Vertebrata</taxon>
        <taxon>Euteleostomi</taxon>
        <taxon>Mammalia</taxon>
        <taxon>Eutheria</taxon>
        <taxon>Euarchontoglires</taxon>
        <taxon>Glires</taxon>
        <taxon>Rodentia</taxon>
        <taxon>Myomorpha</taxon>
        <taxon>Muroidea</taxon>
        <taxon>Muridae</taxon>
        <taxon>Murinae</taxon>
        <taxon>Mus</taxon>
        <taxon>Mus</taxon>
    </lineage>
</organism>
<dbReference type="EMBL" id="AL772235">
    <property type="status" value="NOT_ANNOTATED_CDS"/>
    <property type="molecule type" value="Genomic_DNA"/>
</dbReference>
<dbReference type="EMBL" id="BX284648">
    <property type="status" value="NOT_ANNOTATED_CDS"/>
    <property type="molecule type" value="Genomic_DNA"/>
</dbReference>
<dbReference type="CCDS" id="CCDS38130.1"/>
<dbReference type="CCDS" id="CCDS84529.1"/>
<dbReference type="RefSeq" id="NP_001092768.1">
    <property type="nucleotide sequence ID" value="NM_001099298.3"/>
</dbReference>
<dbReference type="SMR" id="B1AWN6"/>
<dbReference type="CORUM" id="B1AWN6"/>
<dbReference type="FunCoup" id="B1AWN6">
    <property type="interactions" value="573"/>
</dbReference>
<dbReference type="IntAct" id="B1AWN6">
    <property type="interactions" value="2"/>
</dbReference>
<dbReference type="MINT" id="B1AWN6"/>
<dbReference type="STRING" id="10090.ENSMUSP00000028377"/>
<dbReference type="GlyCosmos" id="B1AWN6">
    <property type="glycosylation" value="6 sites, No reported glycans"/>
</dbReference>
<dbReference type="GlyGen" id="B1AWN6">
    <property type="glycosylation" value="10 sites, 3 N-linked glycans (3 sites), 1 O-linked glycan (1 site)"/>
</dbReference>
<dbReference type="iPTMnet" id="B1AWN6"/>
<dbReference type="PhosphoSitePlus" id="B1AWN6"/>
<dbReference type="SwissPalm" id="B1AWN6"/>
<dbReference type="PaxDb" id="10090-ENSMUSP00000028377"/>
<dbReference type="PeptideAtlas" id="B1AWN6"/>
<dbReference type="ProteomicsDB" id="312320"/>
<dbReference type="ProteomicsDB" id="342772"/>
<dbReference type="ABCD" id="B1AWN6">
    <property type="antibodies" value="1 sequenced antibody"/>
</dbReference>
<dbReference type="Antibodypedia" id="33769">
    <property type="antibodies" value="181 antibodies from 24 providers"/>
</dbReference>
<dbReference type="Ensembl" id="ENSMUST00000028377.14">
    <property type="protein sequence ID" value="ENSMUSP00000028377.8"/>
    <property type="gene ID" value="ENSMUSG00000075318.14"/>
</dbReference>
<dbReference type="Ensembl" id="ENSMUST00000100067.7">
    <property type="protein sequence ID" value="ENSMUSP00000097645.4"/>
    <property type="gene ID" value="ENSMUSG00000075318.14"/>
</dbReference>
<dbReference type="GeneID" id="110876"/>
<dbReference type="KEGG" id="mmu:110876"/>
<dbReference type="UCSC" id="uc008jwo.2">
    <property type="organism name" value="mouse"/>
</dbReference>
<dbReference type="AGR" id="MGI:98248"/>
<dbReference type="CTD" id="6326"/>
<dbReference type="MGI" id="MGI:98248">
    <property type="gene designation" value="Scn2a"/>
</dbReference>
<dbReference type="VEuPathDB" id="HostDB:ENSMUSG00000075318"/>
<dbReference type="eggNOG" id="KOG2301">
    <property type="taxonomic scope" value="Eukaryota"/>
</dbReference>
<dbReference type="GeneTree" id="ENSGT00940000154224"/>
<dbReference type="InParanoid" id="B1AWN6"/>
<dbReference type="OMA" id="MEESKEX"/>
<dbReference type="OrthoDB" id="2984333at2759"/>
<dbReference type="PhylomeDB" id="B1AWN6"/>
<dbReference type="TreeFam" id="TF323985"/>
<dbReference type="BioGRID-ORCS" id="110876">
    <property type="hits" value="4 hits in 78 CRISPR screens"/>
</dbReference>
<dbReference type="ChiTaRS" id="Scn2a">
    <property type="organism name" value="mouse"/>
</dbReference>
<dbReference type="PRO" id="PR:B1AWN6"/>
<dbReference type="Proteomes" id="UP000000589">
    <property type="component" value="Chromosome 2"/>
</dbReference>
<dbReference type="Bgee" id="ENSMUSG00000075318">
    <property type="expression patterns" value="Expressed in piriform cortex and 137 other cell types or tissues"/>
</dbReference>
<dbReference type="ExpressionAtlas" id="B1AWN6">
    <property type="expression patterns" value="baseline and differential"/>
</dbReference>
<dbReference type="GO" id="GO:0030424">
    <property type="term" value="C:axon"/>
    <property type="evidence" value="ECO:0000314"/>
    <property type="project" value="MGI"/>
</dbReference>
<dbReference type="GO" id="GO:0098978">
    <property type="term" value="C:glutamatergic synapse"/>
    <property type="evidence" value="ECO:0000314"/>
    <property type="project" value="SynGO"/>
</dbReference>
<dbReference type="GO" id="GO:0014704">
    <property type="term" value="C:intercalated disc"/>
    <property type="evidence" value="ECO:0000314"/>
    <property type="project" value="MGI"/>
</dbReference>
<dbReference type="GO" id="GO:0016020">
    <property type="term" value="C:membrane"/>
    <property type="evidence" value="ECO:0000314"/>
    <property type="project" value="MGI"/>
</dbReference>
<dbReference type="GO" id="GO:0033270">
    <property type="term" value="C:paranode region of axon"/>
    <property type="evidence" value="ECO:0000314"/>
    <property type="project" value="MGI"/>
</dbReference>
<dbReference type="GO" id="GO:0005886">
    <property type="term" value="C:plasma membrane"/>
    <property type="evidence" value="ECO:0000314"/>
    <property type="project" value="UniProtKB"/>
</dbReference>
<dbReference type="GO" id="GO:0042734">
    <property type="term" value="C:presynaptic membrane"/>
    <property type="evidence" value="ECO:0000314"/>
    <property type="project" value="SynGO"/>
</dbReference>
<dbReference type="GO" id="GO:0030315">
    <property type="term" value="C:T-tubule"/>
    <property type="evidence" value="ECO:0000314"/>
    <property type="project" value="MGI"/>
</dbReference>
<dbReference type="GO" id="GO:0001518">
    <property type="term" value="C:voltage-gated sodium channel complex"/>
    <property type="evidence" value="ECO:0000304"/>
    <property type="project" value="MGI"/>
</dbReference>
<dbReference type="GO" id="GO:0005272">
    <property type="term" value="F:sodium channel activity"/>
    <property type="evidence" value="ECO:0000304"/>
    <property type="project" value="Reactome"/>
</dbReference>
<dbReference type="GO" id="GO:0005248">
    <property type="term" value="F:voltage-gated sodium channel activity"/>
    <property type="evidence" value="ECO:0000314"/>
    <property type="project" value="MGI"/>
</dbReference>
<dbReference type="GO" id="GO:0071456">
    <property type="term" value="P:cellular response to hypoxia"/>
    <property type="evidence" value="ECO:0000250"/>
    <property type="project" value="UniProtKB"/>
</dbReference>
<dbReference type="GO" id="GO:0021542">
    <property type="term" value="P:dentate gyrus development"/>
    <property type="evidence" value="ECO:0000316"/>
    <property type="project" value="MGI"/>
</dbReference>
<dbReference type="GO" id="GO:0008340">
    <property type="term" value="P:determination of adult lifespan"/>
    <property type="evidence" value="ECO:0000316"/>
    <property type="project" value="MGI"/>
</dbReference>
<dbReference type="GO" id="GO:0008627">
    <property type="term" value="P:intrinsic apoptotic signaling pathway in response to osmotic stress"/>
    <property type="evidence" value="ECO:0000315"/>
    <property type="project" value="MGI"/>
</dbReference>
<dbReference type="GO" id="GO:0007613">
    <property type="term" value="P:memory"/>
    <property type="evidence" value="ECO:0000315"/>
    <property type="project" value="UniProtKB"/>
</dbReference>
<dbReference type="GO" id="GO:0021675">
    <property type="term" value="P:nerve development"/>
    <property type="evidence" value="ECO:0000315"/>
    <property type="project" value="MGI"/>
</dbReference>
<dbReference type="GO" id="GO:0007399">
    <property type="term" value="P:nervous system development"/>
    <property type="evidence" value="ECO:0000315"/>
    <property type="project" value="MGI"/>
</dbReference>
<dbReference type="GO" id="GO:0051402">
    <property type="term" value="P:neuron apoptotic process"/>
    <property type="evidence" value="ECO:0000315"/>
    <property type="project" value="MGI"/>
</dbReference>
<dbReference type="GO" id="GO:0035725">
    <property type="term" value="P:sodium ion transmembrane transport"/>
    <property type="evidence" value="ECO:0000315"/>
    <property type="project" value="UniProtKB"/>
</dbReference>
<dbReference type="GO" id="GO:0006814">
    <property type="term" value="P:sodium ion transport"/>
    <property type="evidence" value="ECO:0000314"/>
    <property type="project" value="MGI"/>
</dbReference>
<dbReference type="CDD" id="cd13433">
    <property type="entry name" value="Na_channel_gate"/>
    <property type="match status" value="1"/>
</dbReference>
<dbReference type="FunFam" id="1.10.238.10:FF:000002">
    <property type="entry name" value="Sodium channel protein"/>
    <property type="match status" value="1"/>
</dbReference>
<dbReference type="FunFam" id="1.10.287.70:FF:000001">
    <property type="entry name" value="Sodium channel protein"/>
    <property type="match status" value="1"/>
</dbReference>
<dbReference type="FunFam" id="1.10.287.70:FF:000003">
    <property type="entry name" value="Sodium channel protein"/>
    <property type="match status" value="1"/>
</dbReference>
<dbReference type="FunFam" id="1.10.287.70:FF:000006">
    <property type="entry name" value="Sodium channel protein"/>
    <property type="match status" value="1"/>
</dbReference>
<dbReference type="FunFam" id="1.20.120.350:FF:000002">
    <property type="entry name" value="Sodium channel protein"/>
    <property type="match status" value="1"/>
</dbReference>
<dbReference type="FunFam" id="1.20.120.350:FF:000004">
    <property type="entry name" value="Sodium channel protein"/>
    <property type="match status" value="1"/>
</dbReference>
<dbReference type="FunFam" id="1.20.120.350:FF:000005">
    <property type="entry name" value="Sodium channel protein"/>
    <property type="match status" value="1"/>
</dbReference>
<dbReference type="FunFam" id="1.20.5.1190:FF:000001">
    <property type="entry name" value="Sodium channel protein"/>
    <property type="match status" value="1"/>
</dbReference>
<dbReference type="FunFam" id="1.20.120.350:FF:000003">
    <property type="entry name" value="Voltage-dependent sodium channel"/>
    <property type="match status" value="1"/>
</dbReference>
<dbReference type="Gene3D" id="1.10.287.70">
    <property type="match status" value="4"/>
</dbReference>
<dbReference type="Gene3D" id="1.10.238.10">
    <property type="entry name" value="EF-hand"/>
    <property type="match status" value="1"/>
</dbReference>
<dbReference type="Gene3D" id="1.20.5.1190">
    <property type="entry name" value="iswi atpase"/>
    <property type="match status" value="1"/>
</dbReference>
<dbReference type="Gene3D" id="1.20.120.350">
    <property type="entry name" value="Voltage-gated potassium channels. Chain C"/>
    <property type="match status" value="4"/>
</dbReference>
<dbReference type="InterPro" id="IPR005821">
    <property type="entry name" value="Ion_trans_dom"/>
</dbReference>
<dbReference type="InterPro" id="IPR000048">
    <property type="entry name" value="IQ_motif_EF-hand-BS"/>
</dbReference>
<dbReference type="InterPro" id="IPR001696">
    <property type="entry name" value="Na_channel_asu"/>
</dbReference>
<dbReference type="InterPro" id="IPR044564">
    <property type="entry name" value="Na_chnl_inactivation_gate"/>
</dbReference>
<dbReference type="InterPro" id="IPR010526">
    <property type="entry name" value="Na_trans_assoc_dom"/>
</dbReference>
<dbReference type="InterPro" id="IPR024583">
    <property type="entry name" value="Na_trans_cytopl"/>
</dbReference>
<dbReference type="InterPro" id="IPR043203">
    <property type="entry name" value="VGCC_Ca_Na"/>
</dbReference>
<dbReference type="InterPro" id="IPR027359">
    <property type="entry name" value="Volt_channel_dom_sf"/>
</dbReference>
<dbReference type="PANTHER" id="PTHR10037:SF278">
    <property type="entry name" value="SODIUM CHANNEL PROTEIN TYPE 2 SUBUNIT ALPHA"/>
    <property type="match status" value="1"/>
</dbReference>
<dbReference type="PANTHER" id="PTHR10037">
    <property type="entry name" value="VOLTAGE-GATED CATION CHANNEL CALCIUM AND SODIUM"/>
    <property type="match status" value="1"/>
</dbReference>
<dbReference type="Pfam" id="PF00520">
    <property type="entry name" value="Ion_trans"/>
    <property type="match status" value="4"/>
</dbReference>
<dbReference type="Pfam" id="PF24609">
    <property type="entry name" value="IQ_SCN5A_C"/>
    <property type="match status" value="1"/>
</dbReference>
<dbReference type="Pfam" id="PF06512">
    <property type="entry name" value="Na_trans_assoc"/>
    <property type="match status" value="1"/>
</dbReference>
<dbReference type="Pfam" id="PF11933">
    <property type="entry name" value="Na_trans_cytopl"/>
    <property type="match status" value="1"/>
</dbReference>
<dbReference type="PRINTS" id="PR00170">
    <property type="entry name" value="NACHANNEL"/>
</dbReference>
<dbReference type="SMART" id="SM00015">
    <property type="entry name" value="IQ"/>
    <property type="match status" value="1"/>
</dbReference>
<dbReference type="SUPFAM" id="SSF81324">
    <property type="entry name" value="Voltage-gated potassium channels"/>
    <property type="match status" value="4"/>
</dbReference>
<dbReference type="PROSITE" id="PS50096">
    <property type="entry name" value="IQ"/>
    <property type="match status" value="1"/>
</dbReference>
<sequence length="2006" mass="227945">MAQSVLVPPGPDSFRFFTRESLAAIEQRIAEEKAKRPKQERKDEDDENGPKPNSDLEAGKSLPFIYGDIPPEMVSEPLEDLDPYYINKKTFIVLNKGKAISRFSATSALYILTPFNPIRKLAIKILVHSLFNVLIMCTILTNCVFMTMSNPPDWTKNVEYTFTGIYTFESLIKILARGFCLEDFTFLRDPWNWLDFTVITFAYVTEFVNLGNVSALRTFRVLRALKTISVIPGLKTIVGALIQSVKKLSDVMILTVFCLSVFALIGLQLFMGNLRNKCLQWPPDNSTFEINITSFFNNSLDWNGTAFNRTMNMFNWDEYIEDKSHFYFLEGQNDALLCGNSSDAGQCPEGYICVKAGRNPNYGYTSFDTFSWAFLSLFRLMTQDFWENLYQLTLRAAGKTYMIFFVLVIFLGSFYLINLILAVVAMAYEEQNQATLEEAEQKEAEFQQMLEQLKKQQEEAQAAAAAASAESRDFSGAGGIGVFSESSSVASKLSSKSEKELKNRRKKKKQKEQAGEEEKEDAVRKSASEDSIRKKGFRFSLEGSRLTYEKRFSSPHQSLLSIRGSLFSPRRNSRASLFSFKGRVKDIGSENDFADDEHSTFEDNDSRRDSLFVPHRHGERRPSNVSQASRASRGIPTLPMNGKMHSAVDCNGVVSLVGGPSALTSPVGQLLPEGTTTETEIRKRRSSSYHVSMDLLEDPTSRQRAMSMASILTNTMEELEESRQKCPPCWYKFANMCLIWDCCKPWLKVKHVVNLVVMDPFVDLAITICIVLNTLFMAMEHYPMTEQFSSVLSVGNLVFTGIFTAEMFLKIIAMDPYYYFQEGWNIFDGFIVSLSLMELGLANVEGLSVLRSFRLLRVFKLAKSWPTLNMLIKIIGNSVGALGNLTLVLAIIVFIFAVVGMQLFGKSYKECVCKISNDCELPRWHMHDFFHSFLIVFRVLCGEWIETMWDCMEVAGQTMCLTVFMMVMVIGNLVVLNLFLALLLSSFSSDNLAATDDDNEMNNLQIAVGRMQKGIDFVKRKIREFIQKAFVRKQKALDEIKPLEDLNNKKDSCISNHTTIEIGKDLNYLKDGNGTTSGIGSSVEKYVVDESDYMSFINNPSLTVTVPIAVGESDFENLNTEEFSSESDMEESKEKLNATSSSEGSTVDIGAPAEGEQPEAEPEESLEPEACFTEDCVRKFKCCQISIEEGKGKLWWNLRKTCYKIVEHNWFETFIVFMILLSSGALAFEDIYIEQRKTIKTMLEYADKVFTYIFILEMLLKWVAYGFQMYFTNAWCWLDFLIVDVSLVSLTANALGYSELGAIKSLRTLRALRPLRALSRFEGMRVVVNALLGAIPSIMNVLLVCLIFWLIFSIMGVNLFAGKFYHCINYTTGEMFDVSVVNNYSECQALIESNQTARWKNVKVNFDNVGLGYLSLLQVATFKGWMDIMYAAVDSRNVELQPKYEDNLYMYLYFVIFIIFGSFFTLNLFIGVIIDNFNQQKKKFGGQDIFMTEEQKKYYNAMKKLGSKKPQKPIPRPANKFQGMVFDFVTKQVFDISIMILICLNMVTMMVETDDQSQEMTNILYWINLVFIVLFTGECVLKLISLRHYYFTIGWNIFDFVVVILSIVGMFLAELIEKYFVSPTLFRVIRLARIGRILRLIKGAKGIRTLLFALMMSLPALFNIGLLLFLVMFIYAIFGMSNFAYVKREVGIDDMFNFETFGNSMICLFQITTSAGWDGLLAPILNSGPPDCDPEKDHPGSSVKGDCGNPSVGIFFFVSYIIISFLVVVNMYIAVILENFSVATEESAEPLSEDDFEMFYEVWEKFDPDATQFIEFCKLSDFAAALDPPLLIAKPNKVQLIAMDLPMVSGDRIHCLDILFAFTKRVLGESGEMDALRIQMEERFMASNPSKVSYEPITTTLKRKQEEVSAIVIQRAYRRYLLKQKVKKVSSIYKKDKGKEDEGTPIKEDIITDKLNENSTPEKTDVTPSTTSPPSYDSVTKPEKEKFEKDKSEKEDKGKDIRESKK</sequence>